<feature type="chain" id="PRO_1000078775" description="Nucleoid-associated protein SaurJH1_0513">
    <location>
        <begin position="1"/>
        <end position="105"/>
    </location>
</feature>
<feature type="region of interest" description="Disordered" evidence="2">
    <location>
        <begin position="1"/>
        <end position="33"/>
    </location>
</feature>
<feature type="compositionally biased region" description="Low complexity" evidence="2">
    <location>
        <begin position="7"/>
        <end position="16"/>
    </location>
</feature>
<feature type="compositionally biased region" description="Basic and acidic residues" evidence="2">
    <location>
        <begin position="21"/>
        <end position="33"/>
    </location>
</feature>
<dbReference type="EMBL" id="CP000736">
    <property type="protein sequence ID" value="ABR51371.1"/>
    <property type="molecule type" value="Genomic_DNA"/>
</dbReference>
<dbReference type="SMR" id="A6TYV3"/>
<dbReference type="KEGG" id="sah:SaurJH1_0513"/>
<dbReference type="HOGENOM" id="CLU_140930_1_0_9"/>
<dbReference type="GO" id="GO:0043590">
    <property type="term" value="C:bacterial nucleoid"/>
    <property type="evidence" value="ECO:0007669"/>
    <property type="project" value="UniProtKB-UniRule"/>
</dbReference>
<dbReference type="GO" id="GO:0005829">
    <property type="term" value="C:cytosol"/>
    <property type="evidence" value="ECO:0007669"/>
    <property type="project" value="TreeGrafter"/>
</dbReference>
<dbReference type="GO" id="GO:0003677">
    <property type="term" value="F:DNA binding"/>
    <property type="evidence" value="ECO:0007669"/>
    <property type="project" value="UniProtKB-UniRule"/>
</dbReference>
<dbReference type="FunFam" id="3.30.1310.10:FF:000002">
    <property type="entry name" value="Nucleoid-associated protein IKC_06587"/>
    <property type="match status" value="1"/>
</dbReference>
<dbReference type="Gene3D" id="3.30.1310.10">
    <property type="entry name" value="Nucleoid-associated protein YbaB-like domain"/>
    <property type="match status" value="1"/>
</dbReference>
<dbReference type="HAMAP" id="MF_00274">
    <property type="entry name" value="DNA_YbaB_EbfC"/>
    <property type="match status" value="1"/>
</dbReference>
<dbReference type="InterPro" id="IPR036894">
    <property type="entry name" value="YbaB-like_sf"/>
</dbReference>
<dbReference type="InterPro" id="IPR004401">
    <property type="entry name" value="YbaB/EbfC"/>
</dbReference>
<dbReference type="NCBIfam" id="TIGR00103">
    <property type="entry name" value="DNA_YbaB_EbfC"/>
    <property type="match status" value="1"/>
</dbReference>
<dbReference type="PANTHER" id="PTHR33449">
    <property type="entry name" value="NUCLEOID-ASSOCIATED PROTEIN YBAB"/>
    <property type="match status" value="1"/>
</dbReference>
<dbReference type="PANTHER" id="PTHR33449:SF1">
    <property type="entry name" value="NUCLEOID-ASSOCIATED PROTEIN YBAB"/>
    <property type="match status" value="1"/>
</dbReference>
<dbReference type="Pfam" id="PF02575">
    <property type="entry name" value="YbaB_DNA_bd"/>
    <property type="match status" value="1"/>
</dbReference>
<dbReference type="PIRSF" id="PIRSF004555">
    <property type="entry name" value="UCP004555"/>
    <property type="match status" value="1"/>
</dbReference>
<dbReference type="SUPFAM" id="SSF82607">
    <property type="entry name" value="YbaB-like"/>
    <property type="match status" value="1"/>
</dbReference>
<comment type="function">
    <text evidence="1">Binds to DNA and alters its conformation. May be involved in regulation of gene expression, nucleoid organization and DNA protection.</text>
</comment>
<comment type="subunit">
    <text evidence="1">Homodimer.</text>
</comment>
<comment type="subcellular location">
    <subcellularLocation>
        <location evidence="1">Cytoplasm</location>
        <location evidence="1">Nucleoid</location>
    </subcellularLocation>
</comment>
<comment type="similarity">
    <text evidence="1">Belongs to the YbaB/EbfC family.</text>
</comment>
<reference key="1">
    <citation type="submission" date="2007-06" db="EMBL/GenBank/DDBJ databases">
        <title>Complete sequence of chromosome of Staphylococcus aureus subsp. aureus JH1.</title>
        <authorList>
            <consortium name="US DOE Joint Genome Institute"/>
            <person name="Copeland A."/>
            <person name="Lucas S."/>
            <person name="Lapidus A."/>
            <person name="Barry K."/>
            <person name="Detter J.C."/>
            <person name="Glavina del Rio T."/>
            <person name="Hammon N."/>
            <person name="Israni S."/>
            <person name="Dalin E."/>
            <person name="Tice H."/>
            <person name="Pitluck S."/>
            <person name="Chain P."/>
            <person name="Malfatti S."/>
            <person name="Shin M."/>
            <person name="Vergez L."/>
            <person name="Schmutz J."/>
            <person name="Larimer F."/>
            <person name="Land M."/>
            <person name="Hauser L."/>
            <person name="Kyrpides N."/>
            <person name="Ivanova N."/>
            <person name="Tomasz A."/>
            <person name="Richardson P."/>
        </authorList>
    </citation>
    <scope>NUCLEOTIDE SEQUENCE [LARGE SCALE GENOMIC DNA]</scope>
    <source>
        <strain>JH1</strain>
    </source>
</reference>
<gene>
    <name type="ordered locus">SaurJH1_0513</name>
</gene>
<keyword id="KW-0963">Cytoplasm</keyword>
<keyword id="KW-0238">DNA-binding</keyword>
<organism>
    <name type="scientific">Staphylococcus aureus (strain JH1)</name>
    <dbReference type="NCBI Taxonomy" id="359787"/>
    <lineage>
        <taxon>Bacteria</taxon>
        <taxon>Bacillati</taxon>
        <taxon>Bacillota</taxon>
        <taxon>Bacilli</taxon>
        <taxon>Bacillales</taxon>
        <taxon>Staphylococcaceae</taxon>
        <taxon>Staphylococcus</taxon>
    </lineage>
</organism>
<sequence>MRGGGNMQQMMKQMQKMQKKMAQEQKKLKEERIVGTAGGGMVAVTVTGHKEVVDVEIKEEAVDPDDIEMLQDLVLAATNEAMNKADELTQERLGKHTQGLNIPGM</sequence>
<protein>
    <recommendedName>
        <fullName evidence="1">Nucleoid-associated protein SaurJH1_0513</fullName>
    </recommendedName>
</protein>
<proteinExistence type="inferred from homology"/>
<name>Y513_STAA2</name>
<accession>A6TYV3</accession>
<evidence type="ECO:0000255" key="1">
    <source>
        <dbReference type="HAMAP-Rule" id="MF_00274"/>
    </source>
</evidence>
<evidence type="ECO:0000256" key="2">
    <source>
        <dbReference type="SAM" id="MobiDB-lite"/>
    </source>
</evidence>